<organism>
    <name type="scientific">Mus musculus</name>
    <name type="common">Mouse</name>
    <dbReference type="NCBI Taxonomy" id="10090"/>
    <lineage>
        <taxon>Eukaryota</taxon>
        <taxon>Metazoa</taxon>
        <taxon>Chordata</taxon>
        <taxon>Craniata</taxon>
        <taxon>Vertebrata</taxon>
        <taxon>Euteleostomi</taxon>
        <taxon>Mammalia</taxon>
        <taxon>Eutheria</taxon>
        <taxon>Euarchontoglires</taxon>
        <taxon>Glires</taxon>
        <taxon>Rodentia</taxon>
        <taxon>Myomorpha</taxon>
        <taxon>Muroidea</taxon>
        <taxon>Muridae</taxon>
        <taxon>Murinae</taxon>
        <taxon>Mus</taxon>
        <taxon>Mus</taxon>
    </lineage>
</organism>
<proteinExistence type="evidence at protein level"/>
<reference key="1">
    <citation type="journal article" date="2004" name="DNA Res.">
        <title>Prediction of the coding sequences of mouse homologues of KIAA gene: IV. The complete nucleotide sequences of 500 mouse KIAA-homologous cDNAs identified by screening of terminal sequences of cDNA clones randomly sampled from size-fractionated libraries.</title>
        <authorList>
            <person name="Okazaki N."/>
            <person name="Kikuno R."/>
            <person name="Ohara R."/>
            <person name="Inamoto S."/>
            <person name="Koseki H."/>
            <person name="Hiraoka S."/>
            <person name="Saga Y."/>
            <person name="Seino S."/>
            <person name="Nishimura M."/>
            <person name="Kaisho T."/>
            <person name="Hoshino K."/>
            <person name="Kitamura H."/>
            <person name="Nagase T."/>
            <person name="Ohara O."/>
            <person name="Koga H."/>
        </authorList>
    </citation>
    <scope>NUCLEOTIDE SEQUENCE [LARGE SCALE MRNA]</scope>
    <source>
        <tissue>Fetal brain</tissue>
    </source>
</reference>
<reference key="2">
    <citation type="journal article" date="2005" name="Science">
        <title>The transcriptional landscape of the mammalian genome.</title>
        <authorList>
            <person name="Carninci P."/>
            <person name="Kasukawa T."/>
            <person name="Katayama S."/>
            <person name="Gough J."/>
            <person name="Frith M.C."/>
            <person name="Maeda N."/>
            <person name="Oyama R."/>
            <person name="Ravasi T."/>
            <person name="Lenhard B."/>
            <person name="Wells C."/>
            <person name="Kodzius R."/>
            <person name="Shimokawa K."/>
            <person name="Bajic V.B."/>
            <person name="Brenner S.E."/>
            <person name="Batalov S."/>
            <person name="Forrest A.R."/>
            <person name="Zavolan M."/>
            <person name="Davis M.J."/>
            <person name="Wilming L.G."/>
            <person name="Aidinis V."/>
            <person name="Allen J.E."/>
            <person name="Ambesi-Impiombato A."/>
            <person name="Apweiler R."/>
            <person name="Aturaliya R.N."/>
            <person name="Bailey T.L."/>
            <person name="Bansal M."/>
            <person name="Baxter L."/>
            <person name="Beisel K.W."/>
            <person name="Bersano T."/>
            <person name="Bono H."/>
            <person name="Chalk A.M."/>
            <person name="Chiu K.P."/>
            <person name="Choudhary V."/>
            <person name="Christoffels A."/>
            <person name="Clutterbuck D.R."/>
            <person name="Crowe M.L."/>
            <person name="Dalla E."/>
            <person name="Dalrymple B.P."/>
            <person name="de Bono B."/>
            <person name="Della Gatta G."/>
            <person name="di Bernardo D."/>
            <person name="Down T."/>
            <person name="Engstrom P."/>
            <person name="Fagiolini M."/>
            <person name="Faulkner G."/>
            <person name="Fletcher C.F."/>
            <person name="Fukushima T."/>
            <person name="Furuno M."/>
            <person name="Futaki S."/>
            <person name="Gariboldi M."/>
            <person name="Georgii-Hemming P."/>
            <person name="Gingeras T.R."/>
            <person name="Gojobori T."/>
            <person name="Green R.E."/>
            <person name="Gustincich S."/>
            <person name="Harbers M."/>
            <person name="Hayashi Y."/>
            <person name="Hensch T.K."/>
            <person name="Hirokawa N."/>
            <person name="Hill D."/>
            <person name="Huminiecki L."/>
            <person name="Iacono M."/>
            <person name="Ikeo K."/>
            <person name="Iwama A."/>
            <person name="Ishikawa T."/>
            <person name="Jakt M."/>
            <person name="Kanapin A."/>
            <person name="Katoh M."/>
            <person name="Kawasawa Y."/>
            <person name="Kelso J."/>
            <person name="Kitamura H."/>
            <person name="Kitano H."/>
            <person name="Kollias G."/>
            <person name="Krishnan S.P."/>
            <person name="Kruger A."/>
            <person name="Kummerfeld S.K."/>
            <person name="Kurochkin I.V."/>
            <person name="Lareau L.F."/>
            <person name="Lazarevic D."/>
            <person name="Lipovich L."/>
            <person name="Liu J."/>
            <person name="Liuni S."/>
            <person name="McWilliam S."/>
            <person name="Madan Babu M."/>
            <person name="Madera M."/>
            <person name="Marchionni L."/>
            <person name="Matsuda H."/>
            <person name="Matsuzawa S."/>
            <person name="Miki H."/>
            <person name="Mignone F."/>
            <person name="Miyake S."/>
            <person name="Morris K."/>
            <person name="Mottagui-Tabar S."/>
            <person name="Mulder N."/>
            <person name="Nakano N."/>
            <person name="Nakauchi H."/>
            <person name="Ng P."/>
            <person name="Nilsson R."/>
            <person name="Nishiguchi S."/>
            <person name="Nishikawa S."/>
            <person name="Nori F."/>
            <person name="Ohara O."/>
            <person name="Okazaki Y."/>
            <person name="Orlando V."/>
            <person name="Pang K.C."/>
            <person name="Pavan W.J."/>
            <person name="Pavesi G."/>
            <person name="Pesole G."/>
            <person name="Petrovsky N."/>
            <person name="Piazza S."/>
            <person name="Reed J."/>
            <person name="Reid J.F."/>
            <person name="Ring B.Z."/>
            <person name="Ringwald M."/>
            <person name="Rost B."/>
            <person name="Ruan Y."/>
            <person name="Salzberg S.L."/>
            <person name="Sandelin A."/>
            <person name="Schneider C."/>
            <person name="Schoenbach C."/>
            <person name="Sekiguchi K."/>
            <person name="Semple C.A."/>
            <person name="Seno S."/>
            <person name="Sessa L."/>
            <person name="Sheng Y."/>
            <person name="Shibata Y."/>
            <person name="Shimada H."/>
            <person name="Shimada K."/>
            <person name="Silva D."/>
            <person name="Sinclair B."/>
            <person name="Sperling S."/>
            <person name="Stupka E."/>
            <person name="Sugiura K."/>
            <person name="Sultana R."/>
            <person name="Takenaka Y."/>
            <person name="Taki K."/>
            <person name="Tammoja K."/>
            <person name="Tan S.L."/>
            <person name="Tang S."/>
            <person name="Taylor M.S."/>
            <person name="Tegner J."/>
            <person name="Teichmann S.A."/>
            <person name="Ueda H.R."/>
            <person name="van Nimwegen E."/>
            <person name="Verardo R."/>
            <person name="Wei C.L."/>
            <person name="Yagi K."/>
            <person name="Yamanishi H."/>
            <person name="Zabarovsky E."/>
            <person name="Zhu S."/>
            <person name="Zimmer A."/>
            <person name="Hide W."/>
            <person name="Bult C."/>
            <person name="Grimmond S.M."/>
            <person name="Teasdale R.D."/>
            <person name="Liu E.T."/>
            <person name="Brusic V."/>
            <person name="Quackenbush J."/>
            <person name="Wahlestedt C."/>
            <person name="Mattick J.S."/>
            <person name="Hume D.A."/>
            <person name="Kai C."/>
            <person name="Sasaki D."/>
            <person name="Tomaru Y."/>
            <person name="Fukuda S."/>
            <person name="Kanamori-Katayama M."/>
            <person name="Suzuki M."/>
            <person name="Aoki J."/>
            <person name="Arakawa T."/>
            <person name="Iida J."/>
            <person name="Imamura K."/>
            <person name="Itoh M."/>
            <person name="Kato T."/>
            <person name="Kawaji H."/>
            <person name="Kawagashira N."/>
            <person name="Kawashima T."/>
            <person name="Kojima M."/>
            <person name="Kondo S."/>
            <person name="Konno H."/>
            <person name="Nakano K."/>
            <person name="Ninomiya N."/>
            <person name="Nishio T."/>
            <person name="Okada M."/>
            <person name="Plessy C."/>
            <person name="Shibata K."/>
            <person name="Shiraki T."/>
            <person name="Suzuki S."/>
            <person name="Tagami M."/>
            <person name="Waki K."/>
            <person name="Watahiki A."/>
            <person name="Okamura-Oho Y."/>
            <person name="Suzuki H."/>
            <person name="Kawai J."/>
            <person name="Hayashizaki Y."/>
        </authorList>
    </citation>
    <scope>NUCLEOTIDE SEQUENCE [LARGE SCALE MRNA]</scope>
    <source>
        <strain>C57BL/6J</strain>
        <tissue>Cerebellum</tissue>
        <tissue>Heart</tissue>
        <tissue>Skin</tissue>
    </source>
</reference>
<reference key="3">
    <citation type="journal article" date="2004" name="Genome Res.">
        <title>The status, quality, and expansion of the NIH full-length cDNA project: the Mammalian Gene Collection (MGC).</title>
        <authorList>
            <consortium name="The MGC Project Team"/>
        </authorList>
    </citation>
    <scope>NUCLEOTIDE SEQUENCE [LARGE SCALE MRNA]</scope>
    <source>
        <strain>FVB/NJ</strain>
        <tissue>Mammary tumor</tissue>
    </source>
</reference>
<reference key="4">
    <citation type="journal article" date="2005" name="Nat. Genet.">
        <title>Mutations of the catalytic subunit of RAB3GAP cause Warburg Micro syndrome.</title>
        <authorList>
            <person name="Aligianis I.A."/>
            <person name="Johnson C.A."/>
            <person name="Gissen P."/>
            <person name="Chen D."/>
            <person name="Hampshire D."/>
            <person name="Hoffmann K."/>
            <person name="Maina E.N."/>
            <person name="Morgan N.V."/>
            <person name="Tee L."/>
            <person name="Morton J."/>
            <person name="Ainsworth J.R."/>
            <person name="Horn D."/>
            <person name="Rosser E."/>
            <person name="Cole T.R.P."/>
            <person name="Stolte-Dijkstra I."/>
            <person name="Fieggen K."/>
            <person name="Clayton-Smith J."/>
            <person name="Megarbane A."/>
            <person name="Shield J.P."/>
            <person name="Newbury-Ecob R."/>
            <person name="Dobyns W.B."/>
            <person name="Graham J.M."/>
            <person name="Kjaer K.W."/>
            <person name="Warburg M."/>
            <person name="Bond J."/>
            <person name="Trembath R.C."/>
            <person name="Harris L.W."/>
            <person name="Takai Y."/>
            <person name="Mundlos S."/>
            <person name="Tannahill D."/>
            <person name="Woods C.G."/>
            <person name="Maher E.R."/>
        </authorList>
    </citation>
    <scope>TISSUE SPECIFICITY</scope>
    <scope>DEVELOPMENTAL STAGE</scope>
</reference>
<reference key="5">
    <citation type="journal article" date="2010" name="Cell">
        <title>A tissue-specific atlas of mouse protein phosphorylation and expression.</title>
        <authorList>
            <person name="Huttlin E.L."/>
            <person name="Jedrychowski M.P."/>
            <person name="Elias J.E."/>
            <person name="Goswami T."/>
            <person name="Rad R."/>
            <person name="Beausoleil S.A."/>
            <person name="Villen J."/>
            <person name="Haas W."/>
            <person name="Sowa M.E."/>
            <person name="Gygi S.P."/>
        </authorList>
    </citation>
    <scope>PHOSPHORYLATION [LARGE SCALE ANALYSIS] AT SER-83; SER-579 AND SER-581</scope>
    <scope>IDENTIFICATION BY MASS SPECTROMETRY [LARGE SCALE ANALYSIS]</scope>
    <source>
        <tissue>Brain</tissue>
        <tissue>Brown adipose tissue</tissue>
        <tissue>Heart</tissue>
        <tissue>Kidney</tissue>
        <tissue>Liver</tissue>
        <tissue>Lung</tissue>
        <tissue>Pancreas</tissue>
        <tissue>Spleen</tissue>
        <tissue>Testis</tissue>
    </source>
</reference>
<comment type="function">
    <text evidence="2">Catalytic subunit of the Rab3 GTPase-activating (Rab3GAP) complex composed of RAB3GAP1 and RAB3GAP2, which has GTPase-activating protein (GAP) activity towards various Rab3 subfamily members (RAB3A, RAB3B, RAB3C and RAB3D), RAB5A and RAB43, and guanine nucleotide exchange factor (GEF) activity towards RAB18. As part of the Rab3GAP complex, acts as a GAP for Rab3 proteins by converting active RAB3-GTP to the inactive form RAB3-GDP. Rab3 proteins are involved in regulated exocytosis of neurotransmitters and hormones. The Rab3GAP complex, acts as a GEF for RAB18 by promoting the conversion of inactive RAB18-GDP to the active form RAB18-GTP. Recruits and stabilizes RAB18 at the cis-Golgi membrane where RAB18 is most likely activated. Also involved in RAB18 recruitment at the endoplasmic reticulum (ER) membrane where it maintains proper ER structure. Required for normal eye and brain development. May participate in neurodevelopmental processes such as proliferation, migration and differentiation before synapse formation, and non-synaptic vesicular release of neurotransmitters.</text>
</comment>
<comment type="subunit">
    <text evidence="1 2">The Rab3 GTPase-activating complex is a heterodimer composed of Rab3gap1 and Rab3gap2 (By similarity). The Rab3 GTPase-activating complex interacts with DMXL2 (By similarity). Interacts with LMAN1 (By similarity).</text>
</comment>
<comment type="subcellular location">
    <subcellularLocation>
        <location evidence="2">Cytoplasm</location>
    </subcellularLocation>
    <subcellularLocation>
        <location evidence="2">Endoplasmic reticulum</location>
    </subcellularLocation>
    <subcellularLocation>
        <location evidence="2">Golgi apparatus</location>
        <location evidence="2">cis-Golgi network</location>
    </subcellularLocation>
    <text evidence="2">In neurons, it is enriched in the synaptic soluble fraction.</text>
</comment>
<comment type="tissue specificity">
    <text evidence="4">In the eye, it is highly expressed within the lens, particularly in the anterior lens epithelium and in a ring corresponding to the equatorial region where anterior cells are differentiating into lens fibers. Also highly expressed in the retina.</text>
</comment>
<comment type="developmental stage">
    <text evidence="4">From 10 dpc to 12 dpc, it is weakly expressed throughout the embryo. At 14.5 dpc, it is predominantly expressed in a number of organ systems, including the central and peripheral nervous systems.</text>
</comment>
<comment type="similarity">
    <text evidence="5">Belongs to the Rab3-GAP catalytic subunit family.</text>
</comment>
<comment type="sequence caution" evidence="5">
    <conflict type="erroneous initiation">
        <sequence resource="EMBL-CDS" id="BAD32159"/>
    </conflict>
</comment>
<protein>
    <recommendedName>
        <fullName>Rab3 GTPase-activating protein catalytic subunit</fullName>
    </recommendedName>
    <alternativeName>
        <fullName>RAB3 GTPase-activating protein 130 kDa subunit</fullName>
    </alternativeName>
    <alternativeName>
        <fullName>Rab3-GAP p130</fullName>
        <shortName>Rab3-GAP</shortName>
    </alternativeName>
</protein>
<evidence type="ECO:0000250" key="1">
    <source>
        <dbReference type="UniProtKB" id="P69735"/>
    </source>
</evidence>
<evidence type="ECO:0000250" key="2">
    <source>
        <dbReference type="UniProtKB" id="Q15042"/>
    </source>
</evidence>
<evidence type="ECO:0000256" key="3">
    <source>
        <dbReference type="SAM" id="MobiDB-lite"/>
    </source>
</evidence>
<evidence type="ECO:0000269" key="4">
    <source>
    </source>
</evidence>
<evidence type="ECO:0000305" key="5"/>
<evidence type="ECO:0000312" key="6">
    <source>
        <dbReference type="MGI" id="MGI:2445001"/>
    </source>
</evidence>
<evidence type="ECO:0007744" key="7">
    <source>
    </source>
</evidence>
<feature type="chain" id="PRO_0000191656" description="Rab3 GTPase-activating protein catalytic subunit">
    <location>
        <begin position="1"/>
        <end position="981"/>
    </location>
</feature>
<feature type="region of interest" description="Disordered" evidence="3">
    <location>
        <begin position="532"/>
        <end position="558"/>
    </location>
</feature>
<feature type="region of interest" description="Disordered" evidence="3">
    <location>
        <begin position="591"/>
        <end position="614"/>
    </location>
</feature>
<feature type="modified residue" description="Phosphoserine" evidence="7">
    <location>
        <position position="83"/>
    </location>
</feature>
<feature type="modified residue" description="Phosphoserine" evidence="2">
    <location>
        <position position="379"/>
    </location>
</feature>
<feature type="modified residue" description="Phosphoserine" evidence="2">
    <location>
        <position position="536"/>
    </location>
</feature>
<feature type="modified residue" description="Phosphoserine" evidence="7">
    <location>
        <position position="579"/>
    </location>
</feature>
<feature type="modified residue" description="Phosphoserine" evidence="7">
    <location>
        <position position="581"/>
    </location>
</feature>
<feature type="modified residue" description="Phosphoserine" evidence="2">
    <location>
        <position position="590"/>
    </location>
</feature>
<feature type="modified residue" description="Phosphoserine" evidence="2">
    <location>
        <position position="664"/>
    </location>
</feature>
<feature type="sequence conflict" description="In Ref. 2; BAC36271." evidence="5" ref="2">
    <original>G</original>
    <variation>D</variation>
    <location>
        <position position="56"/>
    </location>
</feature>
<feature type="sequence conflict" description="In Ref. 2; BAC36271." evidence="5" ref="2">
    <original>E</original>
    <variation>K</variation>
    <location>
        <position position="64"/>
    </location>
</feature>
<feature type="sequence conflict" description="In Ref. 2; BAC36271." evidence="5" ref="2">
    <original>R</original>
    <variation>K</variation>
    <location>
        <position position="71"/>
    </location>
</feature>
<feature type="sequence conflict" description="In Ref. 1; BAD32159 and 3; AAH46297." evidence="5" ref="1 3">
    <original>R</original>
    <variation>G</variation>
    <location>
        <position position="88"/>
    </location>
</feature>
<feature type="sequence conflict" description="In Ref. 2; BAC36271." evidence="5" ref="2">
    <original>C</original>
    <variation>S</variation>
    <location>
        <position position="106"/>
    </location>
</feature>
<feature type="sequence conflict" description="In Ref. 2; BAC36271." evidence="5" ref="2">
    <original>HC</original>
    <variation>TS</variation>
    <location>
        <begin position="116"/>
        <end position="117"/>
    </location>
</feature>
<feature type="sequence conflict" description="In Ref. 2; BAC36271." evidence="5" ref="2">
    <original>L</original>
    <variation>Q</variation>
    <location>
        <position position="124"/>
    </location>
</feature>
<feature type="sequence conflict" description="In Ref. 2; BAC36271." evidence="5" ref="2">
    <original>R</original>
    <variation>P</variation>
    <location>
        <position position="175"/>
    </location>
</feature>
<feature type="sequence conflict" description="In Ref. 2; BAC37915." evidence="5" ref="2">
    <original>IG</original>
    <variation>LS</variation>
    <location>
        <begin position="216"/>
        <end position="217"/>
    </location>
</feature>
<feature type="sequence conflict" description="In Ref. 2; BAC36271." evidence="5" ref="2">
    <original>Q</original>
    <variation>H</variation>
    <location>
        <position position="321"/>
    </location>
</feature>
<feature type="sequence conflict" description="In Ref. 2; BAC36323." evidence="5" ref="2">
    <original>R</original>
    <variation>P</variation>
    <location>
        <position position="619"/>
    </location>
</feature>
<sequence length="981" mass="110198">MAADSEPESEVFEITDFTTASEWERFISKVEEVLNDWKLIGPSLGKPLEKGIFTSGTWEERSDEISFADFRFSVTHHYLVQESPDKERKDEELEDAIPQSMQDLLCMNNDFPPRAHCLVRWYGLREFVVIAPAAHSDAVLSESKCNLLLSSISIALGNTGCQVPLFVQIHHKWRRMYMGECQGPGVRTDFEMVHLRKVPSQYTHLSGLLDIFKSKIGCPLTPLPPVSIAIRLTYVLQDWQQYFWPQQPPDIDALVGGEVGGLEFGKLPFGACEDPISELHLATTWPHLTEGIIVDNDVYSDLDPVQAPHWSVRVRKADNPQCLLGDFVTEFLKICRRKESTDEILGRSTFEEEGREVADITHALSKLTEPAPVPIHKLSVSNMVHTAKKKIRKHRGEESPLNSDVLNTILLFLFPDAVSEKPLDGTTSIDNSIPAPEAGDYTLYNQFKSAPSDSLTYKLALCLCMINFYHGGLKGVAHLWQEFVLEMRFRWENNFLIPGLASGSPDLRCCLLHQKLQMLNCCIERKKARDEGKKTSLSDSTTSAYPGDAGKTGGQLGLDHLRDTEKEKGEVGKSWDSWSDSEEEFFECLSDTEDLKGNGQESGKKGGPKEMANLKPEGRLHQHGKLTLLHNGEPLYIPVTQEPAPMTEDLLEEQSEVLAKLGTSAEGAHLRARMQSACLLSDMESFKAANPGCFLEDFVRWYSPRDYIEEEVTDEKGNVVLKGELSARMKIPSNMWVEAWETAKPVPARRQRRLFDDTREAEKVLHYLAMQKPADLARHLLPCVIHAAVLKVKEEESLENIPSVKKIIKQIIAHSSKVLHFPNPEDKKLEEIILQITTVEAIIARARSLKAKFGTEKCEHEEEKEGLERFVSCLLEQPEVSVTGAGRGHAGRIIHKLFVNAQRAAAVALPEEELKKSGCPEERRQTLVSDFPPPAGRELILRATVPRPAPYSKALPQRMYSVLTKEDFRLAGAFSSDTSFF</sequence>
<gene>
    <name evidence="6" type="primary">Rab3gap1</name>
    <name type="synonym">Kiaa0066</name>
    <name type="synonym">Rab3gap</name>
</gene>
<dbReference type="EMBL" id="AK172881">
    <property type="protein sequence ID" value="BAD32159.1"/>
    <property type="status" value="ALT_INIT"/>
    <property type="molecule type" value="mRNA"/>
</dbReference>
<dbReference type="EMBL" id="AK076244">
    <property type="protein sequence ID" value="BAC36271.1"/>
    <property type="molecule type" value="mRNA"/>
</dbReference>
<dbReference type="EMBL" id="AK076399">
    <property type="protein sequence ID" value="BAC36323.1"/>
    <property type="molecule type" value="mRNA"/>
</dbReference>
<dbReference type="EMBL" id="AK080432">
    <property type="protein sequence ID" value="BAC37915.1"/>
    <property type="molecule type" value="mRNA"/>
</dbReference>
<dbReference type="EMBL" id="AK164523">
    <property type="protein sequence ID" value="BAE37821.1"/>
    <property type="molecule type" value="mRNA"/>
</dbReference>
<dbReference type="EMBL" id="BC028996">
    <property type="protein sequence ID" value="AAH28996.1"/>
    <property type="molecule type" value="mRNA"/>
</dbReference>
<dbReference type="EMBL" id="BC046297">
    <property type="protein sequence ID" value="AAH46297.1"/>
    <property type="molecule type" value="mRNA"/>
</dbReference>
<dbReference type="CCDS" id="CCDS15249.1"/>
<dbReference type="RefSeq" id="NP_848805.2">
    <property type="nucleotide sequence ID" value="NM_178690.5"/>
</dbReference>
<dbReference type="SMR" id="Q80UJ7"/>
<dbReference type="BioGRID" id="230504">
    <property type="interactions" value="17"/>
</dbReference>
<dbReference type="FunCoup" id="Q80UJ7">
    <property type="interactions" value="2296"/>
</dbReference>
<dbReference type="IntAct" id="Q80UJ7">
    <property type="interactions" value="6"/>
</dbReference>
<dbReference type="STRING" id="10090.ENSMUSP00000042070"/>
<dbReference type="iPTMnet" id="Q80UJ7"/>
<dbReference type="PhosphoSitePlus" id="Q80UJ7"/>
<dbReference type="SwissPalm" id="Q80UJ7"/>
<dbReference type="jPOST" id="Q80UJ7"/>
<dbReference type="PaxDb" id="10090-ENSMUSP00000042070"/>
<dbReference type="PeptideAtlas" id="Q80UJ7"/>
<dbReference type="ProteomicsDB" id="300249"/>
<dbReference type="Pumba" id="Q80UJ7"/>
<dbReference type="Antibodypedia" id="33565">
    <property type="antibodies" value="175 antibodies from 29 providers"/>
</dbReference>
<dbReference type="DNASU" id="226407"/>
<dbReference type="Ensembl" id="ENSMUST00000037649.6">
    <property type="protein sequence ID" value="ENSMUSP00000042070.6"/>
    <property type="gene ID" value="ENSMUSG00000036104.13"/>
</dbReference>
<dbReference type="GeneID" id="226407"/>
<dbReference type="KEGG" id="mmu:226407"/>
<dbReference type="UCSC" id="uc007clc.2">
    <property type="organism name" value="mouse"/>
</dbReference>
<dbReference type="AGR" id="MGI:2445001"/>
<dbReference type="CTD" id="22930"/>
<dbReference type="MGI" id="MGI:2445001">
    <property type="gene designation" value="Rab3gap1"/>
</dbReference>
<dbReference type="VEuPathDB" id="HostDB:ENSMUSG00000036104"/>
<dbReference type="eggNOG" id="KOG2390">
    <property type="taxonomic scope" value="Eukaryota"/>
</dbReference>
<dbReference type="GeneTree" id="ENSGT00390000006705"/>
<dbReference type="HOGENOM" id="CLU_012561_1_0_1"/>
<dbReference type="InParanoid" id="Q80UJ7"/>
<dbReference type="OMA" id="KYAKHRR"/>
<dbReference type="PhylomeDB" id="Q80UJ7"/>
<dbReference type="TreeFam" id="TF314500"/>
<dbReference type="Reactome" id="R-MMU-6811436">
    <property type="pathway name" value="COPI-independent Golgi-to-ER retrograde traffic"/>
</dbReference>
<dbReference type="Reactome" id="R-MMU-8876198">
    <property type="pathway name" value="RAB GEFs exchange GTP for GDP on RABs"/>
</dbReference>
<dbReference type="BioGRID-ORCS" id="226407">
    <property type="hits" value="2 hits in 76 CRISPR screens"/>
</dbReference>
<dbReference type="ChiTaRS" id="Rab3gap1">
    <property type="organism name" value="mouse"/>
</dbReference>
<dbReference type="PRO" id="PR:Q80UJ7"/>
<dbReference type="Proteomes" id="UP000000589">
    <property type="component" value="Chromosome 1"/>
</dbReference>
<dbReference type="RNAct" id="Q80UJ7">
    <property type="molecule type" value="protein"/>
</dbReference>
<dbReference type="Bgee" id="ENSMUSG00000036104">
    <property type="expression patterns" value="Expressed in interventricular septum and 227 other cell types or tissues"/>
</dbReference>
<dbReference type="ExpressionAtlas" id="Q80UJ7">
    <property type="expression patterns" value="baseline and differential"/>
</dbReference>
<dbReference type="GO" id="GO:0005801">
    <property type="term" value="C:cis-Golgi network"/>
    <property type="evidence" value="ECO:0000250"/>
    <property type="project" value="UniProtKB"/>
</dbReference>
<dbReference type="GO" id="GO:0005737">
    <property type="term" value="C:cytoplasm"/>
    <property type="evidence" value="ECO:0000250"/>
    <property type="project" value="ParkinsonsUK-UCL"/>
</dbReference>
<dbReference type="GO" id="GO:0071782">
    <property type="term" value="C:endoplasmic reticulum tubular network"/>
    <property type="evidence" value="ECO:0000250"/>
    <property type="project" value="ParkinsonsUK-UCL"/>
</dbReference>
<dbReference type="GO" id="GO:0098794">
    <property type="term" value="C:postsynapse"/>
    <property type="evidence" value="ECO:0007669"/>
    <property type="project" value="GOC"/>
</dbReference>
<dbReference type="GO" id="GO:0032991">
    <property type="term" value="C:protein-containing complex"/>
    <property type="evidence" value="ECO:0000250"/>
    <property type="project" value="ParkinsonsUK-UCL"/>
</dbReference>
<dbReference type="GO" id="GO:0005096">
    <property type="term" value="F:GTPase activator activity"/>
    <property type="evidence" value="ECO:0000266"/>
    <property type="project" value="MGI"/>
</dbReference>
<dbReference type="GO" id="GO:0005085">
    <property type="term" value="F:guanyl-nucleotide exchange factor activity"/>
    <property type="evidence" value="ECO:0000250"/>
    <property type="project" value="UniProtKB"/>
</dbReference>
<dbReference type="GO" id="GO:0031267">
    <property type="term" value="F:small GTPase binding"/>
    <property type="evidence" value="ECO:0000250"/>
    <property type="project" value="ParkinsonsUK-UCL"/>
</dbReference>
<dbReference type="GO" id="GO:0097051">
    <property type="term" value="P:establishment of protein localization to endoplasmic reticulum membrane"/>
    <property type="evidence" value="ECO:0000250"/>
    <property type="project" value="ParkinsonsUK-UCL"/>
</dbReference>
<dbReference type="GO" id="GO:0060079">
    <property type="term" value="P:excitatory postsynaptic potential"/>
    <property type="evidence" value="ECO:0000315"/>
    <property type="project" value="ParkinsonsUK-UCL"/>
</dbReference>
<dbReference type="GO" id="GO:0034389">
    <property type="term" value="P:lipid droplet organization"/>
    <property type="evidence" value="ECO:0000266"/>
    <property type="project" value="MGI"/>
</dbReference>
<dbReference type="GO" id="GO:2000786">
    <property type="term" value="P:positive regulation of autophagosome assembly"/>
    <property type="evidence" value="ECO:0000250"/>
    <property type="project" value="GO_Central"/>
</dbReference>
<dbReference type="GO" id="GO:1903373">
    <property type="term" value="P:positive regulation of endoplasmic reticulum tubular network organization"/>
    <property type="evidence" value="ECO:0000250"/>
    <property type="project" value="ParkinsonsUK-UCL"/>
</dbReference>
<dbReference type="GO" id="GO:0010628">
    <property type="term" value="P:positive regulation of gene expression"/>
    <property type="evidence" value="ECO:0000314"/>
    <property type="project" value="ParkinsonsUK-UCL"/>
</dbReference>
<dbReference type="GO" id="GO:0061646">
    <property type="term" value="P:positive regulation of glutamate neurotransmitter secretion in response to membrane depolarization"/>
    <property type="evidence" value="ECO:0000315"/>
    <property type="project" value="ParkinsonsUK-UCL"/>
</dbReference>
<dbReference type="GO" id="GO:0043547">
    <property type="term" value="P:positive regulation of GTPase activity"/>
    <property type="evidence" value="ECO:0000315"/>
    <property type="project" value="ParkinsonsUK-UCL"/>
</dbReference>
<dbReference type="GO" id="GO:1903061">
    <property type="term" value="P:positive regulation of protein lipidation"/>
    <property type="evidence" value="ECO:0000250"/>
    <property type="project" value="GO_Central"/>
</dbReference>
<dbReference type="GO" id="GO:0050821">
    <property type="term" value="P:protein stabilization"/>
    <property type="evidence" value="ECO:0000305"/>
    <property type="project" value="ParkinsonsUK-UCL"/>
</dbReference>
<dbReference type="GO" id="GO:1903233">
    <property type="term" value="P:regulation of calcium ion-dependent exocytosis of neurotransmitter"/>
    <property type="evidence" value="ECO:0000315"/>
    <property type="project" value="ParkinsonsUK-UCL"/>
</dbReference>
<dbReference type="GO" id="GO:0032483">
    <property type="term" value="P:regulation of Rab protein signal transduction"/>
    <property type="evidence" value="ECO:0000250"/>
    <property type="project" value="ParkinsonsUK-UCL"/>
</dbReference>
<dbReference type="GO" id="GO:0048172">
    <property type="term" value="P:regulation of short-term neuronal synaptic plasticity"/>
    <property type="evidence" value="ECO:0000315"/>
    <property type="project" value="ParkinsonsUK-UCL"/>
</dbReference>
<dbReference type="GO" id="GO:0010807">
    <property type="term" value="P:regulation of synaptic vesicle priming"/>
    <property type="evidence" value="ECO:0000304"/>
    <property type="project" value="ParkinsonsUK-UCL"/>
</dbReference>
<dbReference type="GO" id="GO:0048489">
    <property type="term" value="P:synaptic vesicle transport"/>
    <property type="evidence" value="ECO:0000303"/>
    <property type="project" value="ParkinsonsUK-UCL"/>
</dbReference>
<dbReference type="InterPro" id="IPR045700">
    <property type="entry name" value="Rab3GAP1"/>
</dbReference>
<dbReference type="InterPro" id="IPR045698">
    <property type="entry name" value="Rab3GAP1_C"/>
</dbReference>
<dbReference type="InterPro" id="IPR026147">
    <property type="entry name" value="Rab3GAP1_conserved"/>
</dbReference>
<dbReference type="PANTHER" id="PTHR21422">
    <property type="entry name" value="RAB3 GTPASE-ACTIVATING PROTEIN CATALYTIC SUBUNIT"/>
    <property type="match status" value="1"/>
</dbReference>
<dbReference type="PANTHER" id="PTHR21422:SF9">
    <property type="entry name" value="RAB3 GTPASE-ACTIVATING PROTEIN CATALYTIC SUBUNIT"/>
    <property type="match status" value="1"/>
</dbReference>
<dbReference type="Pfam" id="PF19533">
    <property type="entry name" value="Rab3-GAP_cat_C"/>
    <property type="match status" value="1"/>
</dbReference>
<dbReference type="Pfam" id="PF13890">
    <property type="entry name" value="Rab3-GTPase_cat"/>
    <property type="match status" value="1"/>
</dbReference>
<keyword id="KW-0963">Cytoplasm</keyword>
<keyword id="KW-0256">Endoplasmic reticulum</keyword>
<keyword id="KW-0333">Golgi apparatus</keyword>
<keyword id="KW-0343">GTPase activation</keyword>
<keyword id="KW-0597">Phosphoprotein</keyword>
<keyword id="KW-1185">Reference proteome</keyword>
<accession>Q80UJ7</accession>
<accession>Q3TPB6</accession>
<accession>Q6A0D7</accession>
<accession>Q8C4Y0</accession>
<accession>Q8C679</accession>
<accession>Q8C6A5</accession>
<accession>Q8K324</accession>
<name>RB3GP_MOUSE</name>